<name>YHE7_SCHPO</name>
<comment type="subcellular location">
    <subcellularLocation>
        <location evidence="2">Cytoplasm</location>
    </subcellularLocation>
    <subcellularLocation>
        <location evidence="2">Endoplasmic reticulum</location>
    </subcellularLocation>
    <subcellularLocation>
        <location evidence="2">Golgi apparatus</location>
    </subcellularLocation>
    <subcellularLocation>
        <location evidence="1">Membrane</location>
        <topology evidence="1">Multi-pass membrane protein</topology>
    </subcellularLocation>
</comment>
<comment type="similarity">
    <text evidence="3">Belongs to the UPF0494 family.</text>
</comment>
<gene>
    <name type="ORF">SPBPB2B2.07c</name>
</gene>
<evidence type="ECO:0000255" key="1"/>
<evidence type="ECO:0000269" key="2">
    <source>
    </source>
</evidence>
<evidence type="ECO:0000305" key="3"/>
<reference key="1">
    <citation type="journal article" date="2002" name="Nature">
        <title>The genome sequence of Schizosaccharomyces pombe.</title>
        <authorList>
            <person name="Wood V."/>
            <person name="Gwilliam R."/>
            <person name="Rajandream M.A."/>
            <person name="Lyne M.H."/>
            <person name="Lyne R."/>
            <person name="Stewart A."/>
            <person name="Sgouros J.G."/>
            <person name="Peat N."/>
            <person name="Hayles J."/>
            <person name="Baker S.G."/>
            <person name="Basham D."/>
            <person name="Bowman S."/>
            <person name="Brooks K."/>
            <person name="Brown D."/>
            <person name="Brown S."/>
            <person name="Chillingworth T."/>
            <person name="Churcher C.M."/>
            <person name="Collins M."/>
            <person name="Connor R."/>
            <person name="Cronin A."/>
            <person name="Davis P."/>
            <person name="Feltwell T."/>
            <person name="Fraser A."/>
            <person name="Gentles S."/>
            <person name="Goble A."/>
            <person name="Hamlin N."/>
            <person name="Harris D.E."/>
            <person name="Hidalgo J."/>
            <person name="Hodgson G."/>
            <person name="Holroyd S."/>
            <person name="Hornsby T."/>
            <person name="Howarth S."/>
            <person name="Huckle E.J."/>
            <person name="Hunt S."/>
            <person name="Jagels K."/>
            <person name="James K.D."/>
            <person name="Jones L."/>
            <person name="Jones M."/>
            <person name="Leather S."/>
            <person name="McDonald S."/>
            <person name="McLean J."/>
            <person name="Mooney P."/>
            <person name="Moule S."/>
            <person name="Mungall K.L."/>
            <person name="Murphy L.D."/>
            <person name="Niblett D."/>
            <person name="Odell C."/>
            <person name="Oliver K."/>
            <person name="O'Neil S."/>
            <person name="Pearson D."/>
            <person name="Quail M.A."/>
            <person name="Rabbinowitsch E."/>
            <person name="Rutherford K.M."/>
            <person name="Rutter S."/>
            <person name="Saunders D."/>
            <person name="Seeger K."/>
            <person name="Sharp S."/>
            <person name="Skelton J."/>
            <person name="Simmonds M.N."/>
            <person name="Squares R."/>
            <person name="Squares S."/>
            <person name="Stevens K."/>
            <person name="Taylor K."/>
            <person name="Taylor R.G."/>
            <person name="Tivey A."/>
            <person name="Walsh S.V."/>
            <person name="Warren T."/>
            <person name="Whitehead S."/>
            <person name="Woodward J.R."/>
            <person name="Volckaert G."/>
            <person name="Aert R."/>
            <person name="Robben J."/>
            <person name="Grymonprez B."/>
            <person name="Weltjens I."/>
            <person name="Vanstreels E."/>
            <person name="Rieger M."/>
            <person name="Schaefer M."/>
            <person name="Mueller-Auer S."/>
            <person name="Gabel C."/>
            <person name="Fuchs M."/>
            <person name="Duesterhoeft A."/>
            <person name="Fritzc C."/>
            <person name="Holzer E."/>
            <person name="Moestl D."/>
            <person name="Hilbert H."/>
            <person name="Borzym K."/>
            <person name="Langer I."/>
            <person name="Beck A."/>
            <person name="Lehrach H."/>
            <person name="Reinhardt R."/>
            <person name="Pohl T.M."/>
            <person name="Eger P."/>
            <person name="Zimmermann W."/>
            <person name="Wedler H."/>
            <person name="Wambutt R."/>
            <person name="Purnelle B."/>
            <person name="Goffeau A."/>
            <person name="Cadieu E."/>
            <person name="Dreano S."/>
            <person name="Gloux S."/>
            <person name="Lelaure V."/>
            <person name="Mottier S."/>
            <person name="Galibert F."/>
            <person name="Aves S.J."/>
            <person name="Xiang Z."/>
            <person name="Hunt C."/>
            <person name="Moore K."/>
            <person name="Hurst S.M."/>
            <person name="Lucas M."/>
            <person name="Rochet M."/>
            <person name="Gaillardin C."/>
            <person name="Tallada V.A."/>
            <person name="Garzon A."/>
            <person name="Thode G."/>
            <person name="Daga R.R."/>
            <person name="Cruzado L."/>
            <person name="Jimenez J."/>
            <person name="Sanchez M."/>
            <person name="del Rey F."/>
            <person name="Benito J."/>
            <person name="Dominguez A."/>
            <person name="Revuelta J.L."/>
            <person name="Moreno S."/>
            <person name="Armstrong J."/>
            <person name="Forsburg S.L."/>
            <person name="Cerutti L."/>
            <person name="Lowe T."/>
            <person name="McCombie W.R."/>
            <person name="Paulsen I."/>
            <person name="Potashkin J."/>
            <person name="Shpakovski G.V."/>
            <person name="Ussery D."/>
            <person name="Barrell B.G."/>
            <person name="Nurse P."/>
        </authorList>
    </citation>
    <scope>NUCLEOTIDE SEQUENCE [LARGE SCALE GENOMIC DNA]</scope>
    <source>
        <strain>972 / ATCC 24843</strain>
    </source>
</reference>
<reference evidence="3" key="2">
    <citation type="journal article" date="2006" name="Nat. Biotechnol.">
        <title>ORFeome cloning and global analysis of protein localization in the fission yeast Schizosaccharomyces pombe.</title>
        <authorList>
            <person name="Matsuyama A."/>
            <person name="Arai R."/>
            <person name="Yashiroda Y."/>
            <person name="Shirai A."/>
            <person name="Kamata A."/>
            <person name="Sekido S."/>
            <person name="Kobayashi Y."/>
            <person name="Hashimoto A."/>
            <person name="Hamamoto M."/>
            <person name="Hiraoka Y."/>
            <person name="Horinouchi S."/>
            <person name="Yoshida M."/>
        </authorList>
    </citation>
    <scope>SUBCELLULAR LOCATION [LARGE SCALE ANALYSIS]</scope>
</reference>
<sequence length="250" mass="28749">MSNPESAKKQVDPPGYNELFMVRDTRNVDLERGLELCKPEKVNKQNLFTNIIKPQKDKINIKTDKIKFFLNNLFTEFSKFHDSCYPDGRISTRSKLRWPLLIIWCILIVFAIDKNFEVKDFLSIWINESFINENRFYSEIWGPIAIYICLFILLLLGLICMFPLHLCRVCVLALRETGMIIAVLGAALGMIIAALGATITGLLYFSHWALYKVVILALDLKIEPFKDEIAFLTLPTHNGETLSIRDNNQS</sequence>
<accession>Q9HDU8</accession>
<keyword id="KW-0963">Cytoplasm</keyword>
<keyword id="KW-0256">Endoplasmic reticulum</keyword>
<keyword id="KW-0333">Golgi apparatus</keyword>
<keyword id="KW-0472">Membrane</keyword>
<keyword id="KW-1185">Reference proteome</keyword>
<keyword id="KW-0812">Transmembrane</keyword>
<keyword id="KW-1133">Transmembrane helix</keyword>
<organism>
    <name type="scientific">Schizosaccharomyces pombe (strain 972 / ATCC 24843)</name>
    <name type="common">Fission yeast</name>
    <dbReference type="NCBI Taxonomy" id="284812"/>
    <lineage>
        <taxon>Eukaryota</taxon>
        <taxon>Fungi</taxon>
        <taxon>Dikarya</taxon>
        <taxon>Ascomycota</taxon>
        <taxon>Taphrinomycotina</taxon>
        <taxon>Schizosaccharomycetes</taxon>
        <taxon>Schizosaccharomycetales</taxon>
        <taxon>Schizosaccharomycetaceae</taxon>
        <taxon>Schizosaccharomyces</taxon>
    </lineage>
</organism>
<proteinExistence type="inferred from homology"/>
<feature type="chain" id="PRO_0000306277" description="UPF0494 membrane protein PB2B2.07c">
    <location>
        <begin position="1"/>
        <end position="250"/>
    </location>
</feature>
<feature type="transmembrane region" description="Helical" evidence="1">
    <location>
        <begin position="98"/>
        <end position="118"/>
    </location>
</feature>
<feature type="transmembrane region" description="Helical" evidence="1">
    <location>
        <begin position="144"/>
        <end position="164"/>
    </location>
</feature>
<feature type="transmembrane region" description="Helical" evidence="1">
    <location>
        <begin position="179"/>
        <end position="199"/>
    </location>
</feature>
<protein>
    <recommendedName>
        <fullName>UPF0494 membrane protein PB2B2.07c</fullName>
    </recommendedName>
</protein>
<dbReference type="EMBL" id="CU329671">
    <property type="protein sequence ID" value="CAC21409.2"/>
    <property type="molecule type" value="Genomic_DNA"/>
</dbReference>
<dbReference type="RefSeq" id="NP_596853.2">
    <property type="nucleotide sequence ID" value="NM_001023876.2"/>
</dbReference>
<dbReference type="SMR" id="Q9HDU8"/>
<dbReference type="BioGRID" id="277914">
    <property type="interactions" value="5"/>
</dbReference>
<dbReference type="STRING" id="284812.Q9HDU8"/>
<dbReference type="PaxDb" id="4896-SPBPB2B2.07c.1"/>
<dbReference type="EnsemblFungi" id="SPBPB2B2.07c.1">
    <property type="protein sequence ID" value="SPBPB2B2.07c.1:pep"/>
    <property type="gene ID" value="SPBPB2B2.07c"/>
</dbReference>
<dbReference type="KEGG" id="spo:2541406"/>
<dbReference type="PomBase" id="SPBPB2B2.07c"/>
<dbReference type="VEuPathDB" id="FungiDB:SPBPB2B2.07c"/>
<dbReference type="HOGENOM" id="CLU_097271_0_0_1"/>
<dbReference type="InParanoid" id="Q9HDU8"/>
<dbReference type="PhylomeDB" id="Q9HDU8"/>
<dbReference type="PRO" id="PR:Q9HDU8"/>
<dbReference type="Proteomes" id="UP000002485">
    <property type="component" value="Chromosome II"/>
</dbReference>
<dbReference type="GO" id="GO:0005737">
    <property type="term" value="C:cytoplasm"/>
    <property type="evidence" value="ECO:0007005"/>
    <property type="project" value="PomBase"/>
</dbReference>
<dbReference type="GO" id="GO:0005783">
    <property type="term" value="C:endoplasmic reticulum"/>
    <property type="evidence" value="ECO:0007005"/>
    <property type="project" value="PomBase"/>
</dbReference>
<dbReference type="GO" id="GO:0005794">
    <property type="term" value="C:Golgi apparatus"/>
    <property type="evidence" value="ECO:0007005"/>
    <property type="project" value="PomBase"/>
</dbReference>
<dbReference type="GO" id="GO:0016020">
    <property type="term" value="C:membrane"/>
    <property type="evidence" value="ECO:0007669"/>
    <property type="project" value="UniProtKB-SubCell"/>
</dbReference>
<dbReference type="InterPro" id="IPR009340">
    <property type="entry name" value="DUF999"/>
</dbReference>
<dbReference type="Pfam" id="PF06198">
    <property type="entry name" value="DUF999"/>
    <property type="match status" value="1"/>
</dbReference>